<gene>
    <name evidence="1" type="primary">ndhN</name>
    <name type="ordered locus">P9301_17501</name>
</gene>
<proteinExistence type="inferred from homology"/>
<comment type="function">
    <text evidence="1">NDH-1 shuttles electrons from an unknown electron donor, via FMN and iron-sulfur (Fe-S) centers, to quinones in the respiratory and/or the photosynthetic chain. The immediate electron acceptor for the enzyme in this species is believed to be plastoquinone. Couples the redox reaction to proton translocation, and thus conserves the redox energy in a proton gradient. Cyanobacterial NDH-1 also plays a role in inorganic carbon-concentration.</text>
</comment>
<comment type="catalytic activity">
    <reaction evidence="1">
        <text>a plastoquinone + NADH + (n+1) H(+)(in) = a plastoquinol + NAD(+) + n H(+)(out)</text>
        <dbReference type="Rhea" id="RHEA:42608"/>
        <dbReference type="Rhea" id="RHEA-COMP:9561"/>
        <dbReference type="Rhea" id="RHEA-COMP:9562"/>
        <dbReference type="ChEBI" id="CHEBI:15378"/>
        <dbReference type="ChEBI" id="CHEBI:17757"/>
        <dbReference type="ChEBI" id="CHEBI:57540"/>
        <dbReference type="ChEBI" id="CHEBI:57945"/>
        <dbReference type="ChEBI" id="CHEBI:62192"/>
    </reaction>
</comment>
<comment type="catalytic activity">
    <reaction evidence="1">
        <text>a plastoquinone + NADPH + (n+1) H(+)(in) = a plastoquinol + NADP(+) + n H(+)(out)</text>
        <dbReference type="Rhea" id="RHEA:42612"/>
        <dbReference type="Rhea" id="RHEA-COMP:9561"/>
        <dbReference type="Rhea" id="RHEA-COMP:9562"/>
        <dbReference type="ChEBI" id="CHEBI:15378"/>
        <dbReference type="ChEBI" id="CHEBI:17757"/>
        <dbReference type="ChEBI" id="CHEBI:57783"/>
        <dbReference type="ChEBI" id="CHEBI:58349"/>
        <dbReference type="ChEBI" id="CHEBI:62192"/>
    </reaction>
</comment>
<comment type="subunit">
    <text evidence="1">NDH-1 can be composed of about 15 different subunits; different subcomplexes with different compositions have been identified which probably have different functions.</text>
</comment>
<comment type="subcellular location">
    <subcellularLocation>
        <location evidence="1">Cellular thylakoid membrane</location>
        <topology evidence="1">Peripheral membrane protein</topology>
        <orientation evidence="1">Cytoplasmic side</orientation>
    </subcellularLocation>
</comment>
<comment type="similarity">
    <text evidence="1">Belongs to the complex I NdhN subunit family.</text>
</comment>
<dbReference type="EC" id="7.1.1.-" evidence="1"/>
<dbReference type="EMBL" id="CP000576">
    <property type="protein sequence ID" value="ABO18373.1"/>
    <property type="molecule type" value="Genomic_DNA"/>
</dbReference>
<dbReference type="RefSeq" id="WP_011863661.1">
    <property type="nucleotide sequence ID" value="NC_009091.1"/>
</dbReference>
<dbReference type="SMR" id="A3PF48"/>
<dbReference type="STRING" id="167546.P9301_17501"/>
<dbReference type="KEGG" id="pmg:P9301_17501"/>
<dbReference type="eggNOG" id="ENOG5033TWM">
    <property type="taxonomic scope" value="Bacteria"/>
</dbReference>
<dbReference type="HOGENOM" id="CLU_087432_0_0_3"/>
<dbReference type="OrthoDB" id="510798at2"/>
<dbReference type="Proteomes" id="UP000001430">
    <property type="component" value="Chromosome"/>
</dbReference>
<dbReference type="GO" id="GO:0031676">
    <property type="term" value="C:plasma membrane-derived thylakoid membrane"/>
    <property type="evidence" value="ECO:0007669"/>
    <property type="project" value="UniProtKB-SubCell"/>
</dbReference>
<dbReference type="GO" id="GO:0016655">
    <property type="term" value="F:oxidoreductase activity, acting on NAD(P)H, quinone or similar compound as acceptor"/>
    <property type="evidence" value="ECO:0007669"/>
    <property type="project" value="UniProtKB-UniRule"/>
</dbReference>
<dbReference type="GO" id="GO:0048038">
    <property type="term" value="F:quinone binding"/>
    <property type="evidence" value="ECO:0007669"/>
    <property type="project" value="UniProtKB-KW"/>
</dbReference>
<dbReference type="HAMAP" id="MF_01353">
    <property type="entry name" value="NDH1_NDH1N"/>
    <property type="match status" value="1"/>
</dbReference>
<dbReference type="InterPro" id="IPR020874">
    <property type="entry name" value="NAD(P)H-quinone_OxRdtase_su_N"/>
</dbReference>
<dbReference type="PANTHER" id="PTHR35515">
    <property type="entry name" value="NAD(P)H-QUINONE OXIDOREDUCTASE SUBUNIT N, CHLOROPLASTIC"/>
    <property type="match status" value="1"/>
</dbReference>
<dbReference type="PANTHER" id="PTHR35515:SF1">
    <property type="entry name" value="NAD(P)H-QUINONE OXIDOREDUCTASE SUBUNIT N, CHLOROPLASTIC"/>
    <property type="match status" value="1"/>
</dbReference>
<dbReference type="Pfam" id="PF11909">
    <property type="entry name" value="NdhN"/>
    <property type="match status" value="1"/>
</dbReference>
<keyword id="KW-0472">Membrane</keyword>
<keyword id="KW-0520">NAD</keyword>
<keyword id="KW-0521">NADP</keyword>
<keyword id="KW-0618">Plastoquinone</keyword>
<keyword id="KW-0874">Quinone</keyword>
<keyword id="KW-1185">Reference proteome</keyword>
<keyword id="KW-0793">Thylakoid</keyword>
<keyword id="KW-1278">Translocase</keyword>
<keyword id="KW-0813">Transport</keyword>
<protein>
    <recommendedName>
        <fullName evidence="1">NAD(P)H-quinone oxidoreductase subunit N</fullName>
        <ecNumber evidence="1">7.1.1.-</ecNumber>
    </recommendedName>
    <alternativeName>
        <fullName evidence="1">NAD(P)H dehydrogenase I subunit N</fullName>
        <shortName evidence="1">NDH-1 subunit N</shortName>
        <shortName evidence="1">NDH-N</shortName>
    </alternativeName>
</protein>
<organism>
    <name type="scientific">Prochlorococcus marinus (strain MIT 9301)</name>
    <dbReference type="NCBI Taxonomy" id="167546"/>
    <lineage>
        <taxon>Bacteria</taxon>
        <taxon>Bacillati</taxon>
        <taxon>Cyanobacteriota</taxon>
        <taxon>Cyanophyceae</taxon>
        <taxon>Synechococcales</taxon>
        <taxon>Prochlorococcaceae</taxon>
        <taxon>Prochlorococcus</taxon>
    </lineage>
</organism>
<evidence type="ECO:0000255" key="1">
    <source>
        <dbReference type="HAMAP-Rule" id="MF_01353"/>
    </source>
</evidence>
<name>NDHN_PROM0</name>
<feature type="chain" id="PRO_0000352223" description="NAD(P)H-quinone oxidoreductase subunit N">
    <location>
        <begin position="1"/>
        <end position="158"/>
    </location>
</feature>
<sequence length="158" mass="17817">MPLLLTGKKFHNDLKTNKCLAIFAPLEGGYETRLLRRMRAKGFKTFITSARGLGDPEVFLLKLHGVRPPHLGHQSVGRNGALGEVQQVIPQASELFNENDKNKLLWLLEGQVLSQSELESLIEICTKDNKLTIVVEMGGSRKLEWKSLSNYILDEFEN</sequence>
<accession>A3PF48</accession>
<reference key="1">
    <citation type="journal article" date="2007" name="PLoS Genet.">
        <title>Patterns and implications of gene gain and loss in the evolution of Prochlorococcus.</title>
        <authorList>
            <person name="Kettler G.C."/>
            <person name="Martiny A.C."/>
            <person name="Huang K."/>
            <person name="Zucker J."/>
            <person name="Coleman M.L."/>
            <person name="Rodrigue S."/>
            <person name="Chen F."/>
            <person name="Lapidus A."/>
            <person name="Ferriera S."/>
            <person name="Johnson J."/>
            <person name="Steglich C."/>
            <person name="Church G.M."/>
            <person name="Richardson P."/>
            <person name="Chisholm S.W."/>
        </authorList>
    </citation>
    <scope>NUCLEOTIDE SEQUENCE [LARGE SCALE GENOMIC DNA]</scope>
    <source>
        <strain>MIT 9301</strain>
    </source>
</reference>